<feature type="chain" id="PRO_1000012467" description="3-phosphoshikimate 1-carboxyvinyltransferase">
    <location>
        <begin position="1"/>
        <end position="428"/>
    </location>
</feature>
<feature type="active site" description="Proton acceptor" evidence="1">
    <location>
        <position position="314"/>
    </location>
</feature>
<feature type="binding site" evidence="1">
    <location>
        <position position="22"/>
    </location>
    <ligand>
        <name>3-phosphoshikimate</name>
        <dbReference type="ChEBI" id="CHEBI:145989"/>
    </ligand>
</feature>
<feature type="binding site" evidence="1">
    <location>
        <position position="22"/>
    </location>
    <ligand>
        <name>phosphoenolpyruvate</name>
        <dbReference type="ChEBI" id="CHEBI:58702"/>
    </ligand>
</feature>
<feature type="binding site" evidence="1">
    <location>
        <position position="23"/>
    </location>
    <ligand>
        <name>3-phosphoshikimate</name>
        <dbReference type="ChEBI" id="CHEBI:145989"/>
    </ligand>
</feature>
<feature type="binding site" evidence="1">
    <location>
        <position position="27"/>
    </location>
    <ligand>
        <name>3-phosphoshikimate</name>
        <dbReference type="ChEBI" id="CHEBI:145989"/>
    </ligand>
</feature>
<feature type="binding site" evidence="1">
    <location>
        <position position="96"/>
    </location>
    <ligand>
        <name>phosphoenolpyruvate</name>
        <dbReference type="ChEBI" id="CHEBI:58702"/>
    </ligand>
</feature>
<feature type="binding site" evidence="1">
    <location>
        <position position="124"/>
    </location>
    <ligand>
        <name>phosphoenolpyruvate</name>
        <dbReference type="ChEBI" id="CHEBI:58702"/>
    </ligand>
</feature>
<feature type="binding site" evidence="1">
    <location>
        <position position="170"/>
    </location>
    <ligand>
        <name>3-phosphoshikimate</name>
        <dbReference type="ChEBI" id="CHEBI:145989"/>
    </ligand>
</feature>
<feature type="binding site" evidence="1">
    <location>
        <position position="171"/>
    </location>
    <ligand>
        <name>3-phosphoshikimate</name>
        <dbReference type="ChEBI" id="CHEBI:145989"/>
    </ligand>
</feature>
<feature type="binding site" evidence="1">
    <location>
        <position position="172"/>
    </location>
    <ligand>
        <name>3-phosphoshikimate</name>
        <dbReference type="ChEBI" id="CHEBI:145989"/>
    </ligand>
</feature>
<feature type="binding site" evidence="1">
    <location>
        <position position="172"/>
    </location>
    <ligand>
        <name>phosphoenolpyruvate</name>
        <dbReference type="ChEBI" id="CHEBI:58702"/>
    </ligand>
</feature>
<feature type="binding site" evidence="1">
    <location>
        <position position="198"/>
    </location>
    <ligand>
        <name>3-phosphoshikimate</name>
        <dbReference type="ChEBI" id="CHEBI:145989"/>
    </ligand>
</feature>
<feature type="binding site" evidence="1">
    <location>
        <position position="314"/>
    </location>
    <ligand>
        <name>3-phosphoshikimate</name>
        <dbReference type="ChEBI" id="CHEBI:145989"/>
    </ligand>
</feature>
<feature type="binding site" evidence="1">
    <location>
        <position position="337"/>
    </location>
    <ligand>
        <name>3-phosphoshikimate</name>
        <dbReference type="ChEBI" id="CHEBI:145989"/>
    </ligand>
</feature>
<feature type="binding site" evidence="1">
    <location>
        <position position="341"/>
    </location>
    <ligand>
        <name>3-phosphoshikimate</name>
        <dbReference type="ChEBI" id="CHEBI:145989"/>
    </ligand>
</feature>
<feature type="binding site" evidence="1">
    <location>
        <position position="345"/>
    </location>
    <ligand>
        <name>phosphoenolpyruvate</name>
        <dbReference type="ChEBI" id="CHEBI:58702"/>
    </ligand>
</feature>
<feature type="binding site" evidence="1">
    <location>
        <position position="387"/>
    </location>
    <ligand>
        <name>phosphoenolpyruvate</name>
        <dbReference type="ChEBI" id="CHEBI:58702"/>
    </ligand>
</feature>
<feature type="binding site" evidence="1">
    <location>
        <position position="412"/>
    </location>
    <ligand>
        <name>phosphoenolpyruvate</name>
        <dbReference type="ChEBI" id="CHEBI:58702"/>
    </ligand>
</feature>
<organism>
    <name type="scientific">Shewanella amazonensis (strain ATCC BAA-1098 / SB2B)</name>
    <dbReference type="NCBI Taxonomy" id="326297"/>
    <lineage>
        <taxon>Bacteria</taxon>
        <taxon>Pseudomonadati</taxon>
        <taxon>Pseudomonadota</taxon>
        <taxon>Gammaproteobacteria</taxon>
        <taxon>Alteromonadales</taxon>
        <taxon>Shewanellaceae</taxon>
        <taxon>Shewanella</taxon>
    </lineage>
</organism>
<name>AROA_SHEAM</name>
<reference key="1">
    <citation type="submission" date="2006-12" db="EMBL/GenBank/DDBJ databases">
        <title>Complete sequence of Shewanella amazonensis SB2B.</title>
        <authorList>
            <consortium name="US DOE Joint Genome Institute"/>
            <person name="Copeland A."/>
            <person name="Lucas S."/>
            <person name="Lapidus A."/>
            <person name="Barry K."/>
            <person name="Detter J.C."/>
            <person name="Glavina del Rio T."/>
            <person name="Hammon N."/>
            <person name="Israni S."/>
            <person name="Dalin E."/>
            <person name="Tice H."/>
            <person name="Pitluck S."/>
            <person name="Munk A.C."/>
            <person name="Brettin T."/>
            <person name="Bruce D."/>
            <person name="Han C."/>
            <person name="Tapia R."/>
            <person name="Gilna P."/>
            <person name="Schmutz J."/>
            <person name="Larimer F."/>
            <person name="Land M."/>
            <person name="Hauser L."/>
            <person name="Kyrpides N."/>
            <person name="Mikhailova N."/>
            <person name="Fredrickson J."/>
            <person name="Richardson P."/>
        </authorList>
    </citation>
    <scope>NUCLEOTIDE SEQUENCE [LARGE SCALE GENOMIC DNA]</scope>
    <source>
        <strain>ATCC BAA-1098 / SB2B</strain>
    </source>
</reference>
<proteinExistence type="inferred from homology"/>
<gene>
    <name evidence="1" type="primary">aroA</name>
    <name type="ordered locus">Sama_1734</name>
</gene>
<sequence length="428" mass="45648">MDQLRLEPVSRVNGVVNIPGSKSISNRALLLATLASGETTLVNLLDSDDIRHMLNALKSLGVNFTLSDDKTVCTLNGLGGPIQTDKAFELFLGNAGTAMRPLCAALTLGTGEFTLTGEPRMEERPIGDLVDALRQLGADIRYLKNDGFPPLTINATGLAGGVVEIDGSLSSQFLTALLMVAPLAKGAVTIAVKGELVSKPYIDITLDLMAKFGVTVVNDNYQRFEIASGQHYVSPGKVLVEGDASSASYFLAAGAIGGGEVKVTGVGRLAVQGDVKFADALAAMGADIEWGEDYIIARGSKLHGIDMDMNHIPDAAMTIATAALFAEGTTRMSNIYNWRIKETDRLAAMATELRKVGAKVEEGHDYIQITPPVKPVHAEIDTYNDHRMAMCFSLLAFADCGVTINDPGCTSKTFPDYFNRFANLAKPD</sequence>
<dbReference type="EC" id="2.5.1.19" evidence="1"/>
<dbReference type="EMBL" id="CP000507">
    <property type="protein sequence ID" value="ABL99939.1"/>
    <property type="molecule type" value="Genomic_DNA"/>
</dbReference>
<dbReference type="RefSeq" id="WP_011759847.1">
    <property type="nucleotide sequence ID" value="NC_008700.1"/>
</dbReference>
<dbReference type="SMR" id="A1S6D3"/>
<dbReference type="STRING" id="326297.Sama_1734"/>
<dbReference type="KEGG" id="saz:Sama_1734"/>
<dbReference type="eggNOG" id="COG0128">
    <property type="taxonomic scope" value="Bacteria"/>
</dbReference>
<dbReference type="HOGENOM" id="CLU_024321_0_0_6"/>
<dbReference type="OrthoDB" id="9809920at2"/>
<dbReference type="UniPathway" id="UPA00053">
    <property type="reaction ID" value="UER00089"/>
</dbReference>
<dbReference type="Proteomes" id="UP000009175">
    <property type="component" value="Chromosome"/>
</dbReference>
<dbReference type="GO" id="GO:0005737">
    <property type="term" value="C:cytoplasm"/>
    <property type="evidence" value="ECO:0007669"/>
    <property type="project" value="UniProtKB-SubCell"/>
</dbReference>
<dbReference type="GO" id="GO:0003866">
    <property type="term" value="F:3-phosphoshikimate 1-carboxyvinyltransferase activity"/>
    <property type="evidence" value="ECO:0007669"/>
    <property type="project" value="UniProtKB-UniRule"/>
</dbReference>
<dbReference type="GO" id="GO:0008652">
    <property type="term" value="P:amino acid biosynthetic process"/>
    <property type="evidence" value="ECO:0007669"/>
    <property type="project" value="UniProtKB-KW"/>
</dbReference>
<dbReference type="GO" id="GO:0009073">
    <property type="term" value="P:aromatic amino acid family biosynthetic process"/>
    <property type="evidence" value="ECO:0007669"/>
    <property type="project" value="UniProtKB-KW"/>
</dbReference>
<dbReference type="GO" id="GO:0009423">
    <property type="term" value="P:chorismate biosynthetic process"/>
    <property type="evidence" value="ECO:0007669"/>
    <property type="project" value="UniProtKB-UniRule"/>
</dbReference>
<dbReference type="CDD" id="cd01556">
    <property type="entry name" value="EPSP_synthase"/>
    <property type="match status" value="1"/>
</dbReference>
<dbReference type="FunFam" id="3.65.10.10:FF:000003">
    <property type="entry name" value="3-phosphoshikimate 1-carboxyvinyltransferase"/>
    <property type="match status" value="1"/>
</dbReference>
<dbReference type="FunFam" id="3.65.10.10:FF:000004">
    <property type="entry name" value="3-phosphoshikimate 1-carboxyvinyltransferase"/>
    <property type="match status" value="1"/>
</dbReference>
<dbReference type="Gene3D" id="3.65.10.10">
    <property type="entry name" value="Enolpyruvate transferase domain"/>
    <property type="match status" value="2"/>
</dbReference>
<dbReference type="HAMAP" id="MF_00210">
    <property type="entry name" value="EPSP_synth"/>
    <property type="match status" value="1"/>
</dbReference>
<dbReference type="InterPro" id="IPR001986">
    <property type="entry name" value="Enolpyruvate_Tfrase_dom"/>
</dbReference>
<dbReference type="InterPro" id="IPR036968">
    <property type="entry name" value="Enolpyruvate_Tfrase_sf"/>
</dbReference>
<dbReference type="InterPro" id="IPR006264">
    <property type="entry name" value="EPSP_synthase"/>
</dbReference>
<dbReference type="InterPro" id="IPR023193">
    <property type="entry name" value="EPSP_synthase_CS"/>
</dbReference>
<dbReference type="InterPro" id="IPR013792">
    <property type="entry name" value="RNA3'P_cycl/enolpyr_Trfase_a/b"/>
</dbReference>
<dbReference type="NCBIfam" id="TIGR01356">
    <property type="entry name" value="aroA"/>
    <property type="match status" value="1"/>
</dbReference>
<dbReference type="PANTHER" id="PTHR21090">
    <property type="entry name" value="AROM/DEHYDROQUINATE SYNTHASE"/>
    <property type="match status" value="1"/>
</dbReference>
<dbReference type="PANTHER" id="PTHR21090:SF5">
    <property type="entry name" value="PENTAFUNCTIONAL AROM POLYPEPTIDE"/>
    <property type="match status" value="1"/>
</dbReference>
<dbReference type="Pfam" id="PF00275">
    <property type="entry name" value="EPSP_synthase"/>
    <property type="match status" value="1"/>
</dbReference>
<dbReference type="PIRSF" id="PIRSF000505">
    <property type="entry name" value="EPSPS"/>
    <property type="match status" value="1"/>
</dbReference>
<dbReference type="SUPFAM" id="SSF55205">
    <property type="entry name" value="EPT/RTPC-like"/>
    <property type="match status" value="1"/>
</dbReference>
<dbReference type="PROSITE" id="PS00104">
    <property type="entry name" value="EPSP_SYNTHASE_1"/>
    <property type="match status" value="1"/>
</dbReference>
<dbReference type="PROSITE" id="PS00885">
    <property type="entry name" value="EPSP_SYNTHASE_2"/>
    <property type="match status" value="1"/>
</dbReference>
<comment type="function">
    <text evidence="1">Catalyzes the transfer of the enolpyruvyl moiety of phosphoenolpyruvate (PEP) to the 5-hydroxyl of shikimate-3-phosphate (S3P) to produce enolpyruvyl shikimate-3-phosphate and inorganic phosphate.</text>
</comment>
<comment type="catalytic activity">
    <reaction evidence="1">
        <text>3-phosphoshikimate + phosphoenolpyruvate = 5-O-(1-carboxyvinyl)-3-phosphoshikimate + phosphate</text>
        <dbReference type="Rhea" id="RHEA:21256"/>
        <dbReference type="ChEBI" id="CHEBI:43474"/>
        <dbReference type="ChEBI" id="CHEBI:57701"/>
        <dbReference type="ChEBI" id="CHEBI:58702"/>
        <dbReference type="ChEBI" id="CHEBI:145989"/>
        <dbReference type="EC" id="2.5.1.19"/>
    </reaction>
    <physiologicalReaction direction="left-to-right" evidence="1">
        <dbReference type="Rhea" id="RHEA:21257"/>
    </physiologicalReaction>
</comment>
<comment type="pathway">
    <text evidence="1">Metabolic intermediate biosynthesis; chorismate biosynthesis; chorismate from D-erythrose 4-phosphate and phosphoenolpyruvate: step 6/7.</text>
</comment>
<comment type="subunit">
    <text evidence="1">Monomer.</text>
</comment>
<comment type="subcellular location">
    <subcellularLocation>
        <location evidence="1">Cytoplasm</location>
    </subcellularLocation>
</comment>
<comment type="similarity">
    <text evidence="1">Belongs to the EPSP synthase family.</text>
</comment>
<evidence type="ECO:0000255" key="1">
    <source>
        <dbReference type="HAMAP-Rule" id="MF_00210"/>
    </source>
</evidence>
<protein>
    <recommendedName>
        <fullName evidence="1">3-phosphoshikimate 1-carboxyvinyltransferase</fullName>
        <ecNumber evidence="1">2.5.1.19</ecNumber>
    </recommendedName>
    <alternativeName>
        <fullName evidence="1">5-enolpyruvylshikimate-3-phosphate synthase</fullName>
        <shortName evidence="1">EPSP synthase</shortName>
        <shortName evidence="1">EPSPS</shortName>
    </alternativeName>
</protein>
<keyword id="KW-0028">Amino-acid biosynthesis</keyword>
<keyword id="KW-0057">Aromatic amino acid biosynthesis</keyword>
<keyword id="KW-0963">Cytoplasm</keyword>
<keyword id="KW-1185">Reference proteome</keyword>
<keyword id="KW-0808">Transferase</keyword>
<accession>A1S6D3</accession>